<accession>Q9A2H5</accession>
<dbReference type="EMBL" id="AE005673">
    <property type="protein sequence ID" value="AAK25548.1"/>
    <property type="molecule type" value="Genomic_DNA"/>
</dbReference>
<dbReference type="PIR" id="H87693">
    <property type="entry name" value="H87693"/>
</dbReference>
<dbReference type="RefSeq" id="NP_422380.1">
    <property type="nucleotide sequence ID" value="NC_002696.2"/>
</dbReference>
<dbReference type="RefSeq" id="WP_010921415.1">
    <property type="nucleotide sequence ID" value="NC_002696.2"/>
</dbReference>
<dbReference type="SMR" id="Q9A2H5"/>
<dbReference type="STRING" id="190650.CC_3586"/>
<dbReference type="EnsemblBacteria" id="AAK25548">
    <property type="protein sequence ID" value="AAK25548"/>
    <property type="gene ID" value="CC_3586"/>
</dbReference>
<dbReference type="KEGG" id="ccr:CC_3586"/>
<dbReference type="PATRIC" id="fig|190650.5.peg.3590"/>
<dbReference type="eggNOG" id="COG0776">
    <property type="taxonomic scope" value="Bacteria"/>
</dbReference>
<dbReference type="HOGENOM" id="CLU_105066_2_1_5"/>
<dbReference type="BioCyc" id="CAULO:CC3586-MONOMER"/>
<dbReference type="Proteomes" id="UP000001816">
    <property type="component" value="Chromosome"/>
</dbReference>
<dbReference type="GO" id="GO:0005694">
    <property type="term" value="C:chromosome"/>
    <property type="evidence" value="ECO:0007669"/>
    <property type="project" value="InterPro"/>
</dbReference>
<dbReference type="GO" id="GO:0005829">
    <property type="term" value="C:cytosol"/>
    <property type="evidence" value="ECO:0007669"/>
    <property type="project" value="TreeGrafter"/>
</dbReference>
<dbReference type="GO" id="GO:0003677">
    <property type="term" value="F:DNA binding"/>
    <property type="evidence" value="ECO:0007669"/>
    <property type="project" value="UniProtKB-UniRule"/>
</dbReference>
<dbReference type="GO" id="GO:0030527">
    <property type="term" value="F:structural constituent of chromatin"/>
    <property type="evidence" value="ECO:0007669"/>
    <property type="project" value="InterPro"/>
</dbReference>
<dbReference type="GO" id="GO:0006310">
    <property type="term" value="P:DNA recombination"/>
    <property type="evidence" value="ECO:0007669"/>
    <property type="project" value="UniProtKB-UniRule"/>
</dbReference>
<dbReference type="GO" id="GO:0006355">
    <property type="term" value="P:regulation of DNA-templated transcription"/>
    <property type="evidence" value="ECO:0007669"/>
    <property type="project" value="UniProtKB-UniRule"/>
</dbReference>
<dbReference type="GO" id="GO:0006417">
    <property type="term" value="P:regulation of translation"/>
    <property type="evidence" value="ECO:0007669"/>
    <property type="project" value="UniProtKB-UniRule"/>
</dbReference>
<dbReference type="CDD" id="cd13836">
    <property type="entry name" value="IHF_B"/>
    <property type="match status" value="1"/>
</dbReference>
<dbReference type="Gene3D" id="4.10.520.10">
    <property type="entry name" value="IHF-like DNA-binding proteins"/>
    <property type="match status" value="1"/>
</dbReference>
<dbReference type="HAMAP" id="MF_00381">
    <property type="entry name" value="IHF_beta"/>
    <property type="match status" value="1"/>
</dbReference>
<dbReference type="InterPro" id="IPR000119">
    <property type="entry name" value="Hist_DNA-bd"/>
</dbReference>
<dbReference type="InterPro" id="IPR020816">
    <property type="entry name" value="Histone-like_DNA-bd_CS"/>
</dbReference>
<dbReference type="InterPro" id="IPR010992">
    <property type="entry name" value="IHF-like_DNA-bd_dom_sf"/>
</dbReference>
<dbReference type="InterPro" id="IPR005685">
    <property type="entry name" value="IHF_beta"/>
</dbReference>
<dbReference type="NCBIfam" id="TIGR00988">
    <property type="entry name" value="hip"/>
    <property type="match status" value="1"/>
</dbReference>
<dbReference type="NCBIfam" id="NF001222">
    <property type="entry name" value="PRK00199.1"/>
    <property type="match status" value="1"/>
</dbReference>
<dbReference type="PANTHER" id="PTHR33175">
    <property type="entry name" value="DNA-BINDING PROTEIN HU"/>
    <property type="match status" value="1"/>
</dbReference>
<dbReference type="PANTHER" id="PTHR33175:SF5">
    <property type="entry name" value="INTEGRATION HOST FACTOR SUBUNIT BETA"/>
    <property type="match status" value="1"/>
</dbReference>
<dbReference type="Pfam" id="PF00216">
    <property type="entry name" value="Bac_DNA_binding"/>
    <property type="match status" value="1"/>
</dbReference>
<dbReference type="PRINTS" id="PR01727">
    <property type="entry name" value="DNABINDINGHU"/>
</dbReference>
<dbReference type="SMART" id="SM00411">
    <property type="entry name" value="BHL"/>
    <property type="match status" value="1"/>
</dbReference>
<dbReference type="SUPFAM" id="SSF47729">
    <property type="entry name" value="IHF-like DNA-binding proteins"/>
    <property type="match status" value="1"/>
</dbReference>
<dbReference type="PROSITE" id="PS00045">
    <property type="entry name" value="HISTONE_LIKE"/>
    <property type="match status" value="1"/>
</dbReference>
<proteinExistence type="inferred from homology"/>
<protein>
    <recommendedName>
        <fullName evidence="1">Integration host factor subunit beta</fullName>
        <shortName evidence="1">IHF-beta</shortName>
    </recommendedName>
</protein>
<reference key="1">
    <citation type="journal article" date="2001" name="Proc. Natl. Acad. Sci. U.S.A.">
        <title>Complete genome sequence of Caulobacter crescentus.</title>
        <authorList>
            <person name="Nierman W.C."/>
            <person name="Feldblyum T.V."/>
            <person name="Laub M.T."/>
            <person name="Paulsen I.T."/>
            <person name="Nelson K.E."/>
            <person name="Eisen J.A."/>
            <person name="Heidelberg J.F."/>
            <person name="Alley M.R.K."/>
            <person name="Ohta N."/>
            <person name="Maddock J.R."/>
            <person name="Potocka I."/>
            <person name="Nelson W.C."/>
            <person name="Newton A."/>
            <person name="Stephens C."/>
            <person name="Phadke N.D."/>
            <person name="Ely B."/>
            <person name="DeBoy R.T."/>
            <person name="Dodson R.J."/>
            <person name="Durkin A.S."/>
            <person name="Gwinn M.L."/>
            <person name="Haft D.H."/>
            <person name="Kolonay J.F."/>
            <person name="Smit J."/>
            <person name="Craven M.B."/>
            <person name="Khouri H.M."/>
            <person name="Shetty J."/>
            <person name="Berry K.J."/>
            <person name="Utterback T.R."/>
            <person name="Tran K."/>
            <person name="Wolf A.M."/>
            <person name="Vamathevan J.J."/>
            <person name="Ermolaeva M.D."/>
            <person name="White O."/>
            <person name="Salzberg S.L."/>
            <person name="Venter J.C."/>
            <person name="Shapiro L."/>
            <person name="Fraser C.M."/>
        </authorList>
    </citation>
    <scope>NUCLEOTIDE SEQUENCE [LARGE SCALE GENOMIC DNA]</scope>
    <source>
        <strain>ATCC 19089 / CIP 103742 / CB 15</strain>
    </source>
</reference>
<organism>
    <name type="scientific">Caulobacter vibrioides (strain ATCC 19089 / CIP 103742 / CB 15)</name>
    <name type="common">Caulobacter crescentus</name>
    <dbReference type="NCBI Taxonomy" id="190650"/>
    <lineage>
        <taxon>Bacteria</taxon>
        <taxon>Pseudomonadati</taxon>
        <taxon>Pseudomonadota</taxon>
        <taxon>Alphaproteobacteria</taxon>
        <taxon>Caulobacterales</taxon>
        <taxon>Caulobacteraceae</taxon>
        <taxon>Caulobacter</taxon>
    </lineage>
</organism>
<name>IHFB_CAUVC</name>
<keyword id="KW-0233">DNA recombination</keyword>
<keyword id="KW-0238">DNA-binding</keyword>
<keyword id="KW-1185">Reference proteome</keyword>
<keyword id="KW-0804">Transcription</keyword>
<keyword id="KW-0805">Transcription regulation</keyword>
<keyword id="KW-0810">Translation regulation</keyword>
<gene>
    <name evidence="1" type="primary">ihfB</name>
    <name evidence="1" type="synonym">himD</name>
    <name type="ordered locus">CC_3586</name>
</gene>
<evidence type="ECO:0000255" key="1">
    <source>
        <dbReference type="HAMAP-Rule" id="MF_00381"/>
    </source>
</evidence>
<comment type="function">
    <text evidence="1">This protein is one of the two subunits of integration host factor, a specific DNA-binding protein that functions in genetic recombination as well as in transcriptional and translational control.</text>
</comment>
<comment type="subunit">
    <text evidence="1">Heterodimer of an alpha and a beta chain.</text>
</comment>
<comment type="similarity">
    <text evidence="1">Belongs to the bacterial histone-like protein family.</text>
</comment>
<feature type="chain" id="PRO_0000105047" description="Integration host factor subunit beta">
    <location>
        <begin position="1"/>
        <end position="96"/>
    </location>
</feature>
<sequence>MIKSELIARLANENPHLTQKDVERVVGVILERMIGALEDGGRVELRGFGALSVRSRPARTGRNPRTGEAVDVRAKHVPFFKSGKELRARLNADGDE</sequence>